<keyword id="KW-0007">Acetylation</keyword>
<keyword id="KW-0010">Activator</keyword>
<keyword id="KW-0051">Antiviral defense</keyword>
<keyword id="KW-0067">ATP-binding</keyword>
<keyword id="KW-0963">Cytoplasm</keyword>
<keyword id="KW-0238">DNA-binding</keyword>
<keyword id="KW-0269">Exonuclease</keyword>
<keyword id="KW-0347">Helicase</keyword>
<keyword id="KW-0378">Hydrolase</keyword>
<keyword id="KW-0391">Immunity</keyword>
<keyword id="KW-0399">Innate immunity</keyword>
<keyword id="KW-1017">Isopeptide bond</keyword>
<keyword id="KW-0496">Mitochondrion</keyword>
<keyword id="KW-0507">mRNA processing</keyword>
<keyword id="KW-0540">Nuclease</keyword>
<keyword id="KW-0547">Nucleotide-binding</keyword>
<keyword id="KW-0539">Nucleus</keyword>
<keyword id="KW-0597">Phosphoprotein</keyword>
<keyword id="KW-1185">Reference proteome</keyword>
<keyword id="KW-0694">RNA-binding</keyword>
<keyword id="KW-0804">Transcription</keyword>
<keyword id="KW-0805">Transcription regulation</keyword>
<keyword id="KW-0819">tRNA processing</keyword>
<keyword id="KW-0832">Ubl conjugation</keyword>
<organism>
    <name type="scientific">Mus musculus</name>
    <name type="common">Mouse</name>
    <dbReference type="NCBI Taxonomy" id="10090"/>
    <lineage>
        <taxon>Eukaryota</taxon>
        <taxon>Metazoa</taxon>
        <taxon>Chordata</taxon>
        <taxon>Craniata</taxon>
        <taxon>Vertebrata</taxon>
        <taxon>Euteleostomi</taxon>
        <taxon>Mammalia</taxon>
        <taxon>Eutheria</taxon>
        <taxon>Euarchontoglires</taxon>
        <taxon>Glires</taxon>
        <taxon>Rodentia</taxon>
        <taxon>Myomorpha</taxon>
        <taxon>Muroidea</taxon>
        <taxon>Muridae</taxon>
        <taxon>Murinae</taxon>
        <taxon>Mus</taxon>
        <taxon>Mus</taxon>
    </lineage>
</organism>
<protein>
    <recommendedName>
        <fullName>ATP-dependent RNA helicase DDX1</fullName>
        <ecNumber>3.6.4.13</ecNumber>
    </recommendedName>
    <alternativeName>
        <fullName>DEAD box protein 1</fullName>
    </alternativeName>
</protein>
<dbReference type="EC" id="3.6.4.13"/>
<dbReference type="EMBL" id="AK028341">
    <property type="protein sequence ID" value="BAC25893.1"/>
    <property type="molecule type" value="mRNA"/>
</dbReference>
<dbReference type="EMBL" id="AK153335">
    <property type="protein sequence ID" value="BAE31914.1"/>
    <property type="molecule type" value="mRNA"/>
</dbReference>
<dbReference type="EMBL" id="AK160982">
    <property type="protein sequence ID" value="BAE36130.1"/>
    <property type="molecule type" value="mRNA"/>
</dbReference>
<dbReference type="EMBL" id="BC010624">
    <property type="protein sequence ID" value="AAH10624.1"/>
    <property type="molecule type" value="mRNA"/>
</dbReference>
<dbReference type="CCDS" id="CCDS25819.1"/>
<dbReference type="RefSeq" id="NP_598801.1">
    <property type="nucleotide sequence ID" value="NM_134040.1"/>
</dbReference>
<dbReference type="SMR" id="Q91VR5"/>
<dbReference type="BioGRID" id="222684">
    <property type="interactions" value="61"/>
</dbReference>
<dbReference type="CORUM" id="Q91VR5"/>
<dbReference type="FunCoup" id="Q91VR5">
    <property type="interactions" value="3841"/>
</dbReference>
<dbReference type="IntAct" id="Q91VR5">
    <property type="interactions" value="6"/>
</dbReference>
<dbReference type="MINT" id="Q91VR5"/>
<dbReference type="STRING" id="10090.ENSMUSP00000065987"/>
<dbReference type="GlyGen" id="Q91VR5">
    <property type="glycosylation" value="2 sites, 1 N-linked glycan (1 site), 1 O-linked glycan (1 site)"/>
</dbReference>
<dbReference type="iPTMnet" id="Q91VR5"/>
<dbReference type="MetOSite" id="Q91VR5"/>
<dbReference type="PhosphoSitePlus" id="Q91VR5"/>
<dbReference type="SwissPalm" id="Q91VR5"/>
<dbReference type="REPRODUCTION-2DPAGE" id="Q91VR5"/>
<dbReference type="jPOST" id="Q91VR5"/>
<dbReference type="PaxDb" id="10090-ENSMUSP00000065987"/>
<dbReference type="PeptideAtlas" id="Q91VR5"/>
<dbReference type="ProteomicsDB" id="277969"/>
<dbReference type="Pumba" id="Q91VR5"/>
<dbReference type="Antibodypedia" id="3224">
    <property type="antibodies" value="264 antibodies from 32 providers"/>
</dbReference>
<dbReference type="DNASU" id="104721"/>
<dbReference type="Ensembl" id="ENSMUST00000071103.10">
    <property type="protein sequence ID" value="ENSMUSP00000065987.9"/>
    <property type="gene ID" value="ENSMUSG00000037149.11"/>
</dbReference>
<dbReference type="GeneID" id="104721"/>
<dbReference type="KEGG" id="mmu:104721"/>
<dbReference type="UCSC" id="uc007nbh.1">
    <property type="organism name" value="mouse"/>
</dbReference>
<dbReference type="AGR" id="MGI:2144727"/>
<dbReference type="CTD" id="1653"/>
<dbReference type="MGI" id="MGI:2144727">
    <property type="gene designation" value="Ddx1"/>
</dbReference>
<dbReference type="VEuPathDB" id="HostDB:ENSMUSG00000037149"/>
<dbReference type="eggNOG" id="KOG0349">
    <property type="taxonomic scope" value="Eukaryota"/>
</dbReference>
<dbReference type="GeneTree" id="ENSGT00940000155678"/>
<dbReference type="HOGENOM" id="CLU_016321_0_0_1"/>
<dbReference type="InParanoid" id="Q91VR5"/>
<dbReference type="OMA" id="KRQQVKF"/>
<dbReference type="OrthoDB" id="1735at2759"/>
<dbReference type="PhylomeDB" id="Q91VR5"/>
<dbReference type="TreeFam" id="TF106114"/>
<dbReference type="BioGRID-ORCS" id="104721">
    <property type="hits" value="28 hits in 118 CRISPR screens"/>
</dbReference>
<dbReference type="CD-CODE" id="764D0258">
    <property type="entry name" value="Neuronal RNP granule"/>
</dbReference>
<dbReference type="CD-CODE" id="CE726F99">
    <property type="entry name" value="Postsynaptic density"/>
</dbReference>
<dbReference type="CD-CODE" id="DE1E139C">
    <property type="entry name" value="Chromatoid body"/>
</dbReference>
<dbReference type="ChiTaRS" id="Ddx1">
    <property type="organism name" value="mouse"/>
</dbReference>
<dbReference type="PRO" id="PR:Q91VR5"/>
<dbReference type="Proteomes" id="UP000000589">
    <property type="component" value="Chromosome 12"/>
</dbReference>
<dbReference type="RNAct" id="Q91VR5">
    <property type="molecule type" value="protein"/>
</dbReference>
<dbReference type="Bgee" id="ENSMUSG00000037149">
    <property type="expression patterns" value="Expressed in metanephric ureteric bud and 270 other cell types or tissues"/>
</dbReference>
<dbReference type="ExpressionAtlas" id="Q91VR5">
    <property type="expression patterns" value="baseline and differential"/>
</dbReference>
<dbReference type="GO" id="GO:0071920">
    <property type="term" value="C:cleavage body"/>
    <property type="evidence" value="ECO:0000250"/>
    <property type="project" value="UniProtKB"/>
</dbReference>
<dbReference type="GO" id="GO:0005737">
    <property type="term" value="C:cytoplasm"/>
    <property type="evidence" value="ECO:0000250"/>
    <property type="project" value="UniProtKB"/>
</dbReference>
<dbReference type="GO" id="GO:0010494">
    <property type="term" value="C:cytoplasmic stress granule"/>
    <property type="evidence" value="ECO:0000314"/>
    <property type="project" value="MGI"/>
</dbReference>
<dbReference type="GO" id="GO:0005829">
    <property type="term" value="C:cytosol"/>
    <property type="evidence" value="ECO:0000314"/>
    <property type="project" value="UniProtKB"/>
</dbReference>
<dbReference type="GO" id="GO:0005739">
    <property type="term" value="C:mitochondrion"/>
    <property type="evidence" value="ECO:0000314"/>
    <property type="project" value="UniProtKB"/>
</dbReference>
<dbReference type="GO" id="GO:0005634">
    <property type="term" value="C:nucleus"/>
    <property type="evidence" value="ECO:0000250"/>
    <property type="project" value="UniProtKB"/>
</dbReference>
<dbReference type="GO" id="GO:1990904">
    <property type="term" value="C:ribonucleoprotein complex"/>
    <property type="evidence" value="ECO:0000266"/>
    <property type="project" value="MGI"/>
</dbReference>
<dbReference type="GO" id="GO:0072669">
    <property type="term" value="C:tRNA-splicing ligase complex"/>
    <property type="evidence" value="ECO:0000250"/>
    <property type="project" value="UniProtKB"/>
</dbReference>
<dbReference type="GO" id="GO:0005524">
    <property type="term" value="F:ATP binding"/>
    <property type="evidence" value="ECO:0007669"/>
    <property type="project" value="UniProtKB-KW"/>
</dbReference>
<dbReference type="GO" id="GO:0016887">
    <property type="term" value="F:ATP hydrolysis activity"/>
    <property type="evidence" value="ECO:0007669"/>
    <property type="project" value="RHEA"/>
</dbReference>
<dbReference type="GO" id="GO:0003682">
    <property type="term" value="F:chromatin binding"/>
    <property type="evidence" value="ECO:0000250"/>
    <property type="project" value="UniProtKB"/>
</dbReference>
<dbReference type="GO" id="GO:0003677">
    <property type="term" value="F:DNA binding"/>
    <property type="evidence" value="ECO:0007669"/>
    <property type="project" value="UniProtKB-KW"/>
</dbReference>
<dbReference type="GO" id="GO:0033677">
    <property type="term" value="F:DNA/RNA helicase activity"/>
    <property type="evidence" value="ECO:0000250"/>
    <property type="project" value="UniProtKB"/>
</dbReference>
<dbReference type="GO" id="GO:0003725">
    <property type="term" value="F:double-stranded RNA binding"/>
    <property type="evidence" value="ECO:0000314"/>
    <property type="project" value="MGI"/>
</dbReference>
<dbReference type="GO" id="GO:0004527">
    <property type="term" value="F:exonuclease activity"/>
    <property type="evidence" value="ECO:0007669"/>
    <property type="project" value="UniProtKB-KW"/>
</dbReference>
<dbReference type="GO" id="GO:0004518">
    <property type="term" value="F:nuclease activity"/>
    <property type="evidence" value="ECO:0000250"/>
    <property type="project" value="UniProtKB"/>
</dbReference>
<dbReference type="GO" id="GO:0008143">
    <property type="term" value="F:poly(A) binding"/>
    <property type="evidence" value="ECO:0000250"/>
    <property type="project" value="UniProtKB"/>
</dbReference>
<dbReference type="GO" id="GO:0003724">
    <property type="term" value="F:RNA helicase activity"/>
    <property type="evidence" value="ECO:0000250"/>
    <property type="project" value="UniProtKB"/>
</dbReference>
<dbReference type="GO" id="GO:0003712">
    <property type="term" value="F:transcription coregulator activity"/>
    <property type="evidence" value="ECO:0000250"/>
    <property type="project" value="UniProtKB"/>
</dbReference>
<dbReference type="GO" id="GO:0051607">
    <property type="term" value="P:defense response to virus"/>
    <property type="evidence" value="ECO:0007669"/>
    <property type="project" value="UniProtKB-KW"/>
</dbReference>
<dbReference type="GO" id="GO:0006302">
    <property type="term" value="P:double-strand break repair"/>
    <property type="evidence" value="ECO:0000250"/>
    <property type="project" value="UniProtKB"/>
</dbReference>
<dbReference type="GO" id="GO:0045087">
    <property type="term" value="P:innate immune response"/>
    <property type="evidence" value="ECO:0007669"/>
    <property type="project" value="UniProtKB-KW"/>
</dbReference>
<dbReference type="GO" id="GO:0006397">
    <property type="term" value="P:mRNA processing"/>
    <property type="evidence" value="ECO:0007669"/>
    <property type="project" value="UniProtKB-KW"/>
</dbReference>
<dbReference type="GO" id="GO:0043123">
    <property type="term" value="P:positive regulation of canonical NF-kappaB signal transduction"/>
    <property type="evidence" value="ECO:0000315"/>
    <property type="project" value="UniProtKB"/>
</dbReference>
<dbReference type="GO" id="GO:0002735">
    <property type="term" value="P:positive regulation of myeloid dendritic cell cytokine production"/>
    <property type="evidence" value="ECO:0000315"/>
    <property type="project" value="UniProtKB"/>
</dbReference>
<dbReference type="GO" id="GO:1903608">
    <property type="term" value="P:protein localization to cytoplasmic stress granule"/>
    <property type="evidence" value="ECO:0007669"/>
    <property type="project" value="Ensembl"/>
</dbReference>
<dbReference type="GO" id="GO:0043330">
    <property type="term" value="P:response to exogenous dsRNA"/>
    <property type="evidence" value="ECO:0000315"/>
    <property type="project" value="MGI"/>
</dbReference>
<dbReference type="GO" id="GO:0009615">
    <property type="term" value="P:response to virus"/>
    <property type="evidence" value="ECO:0000315"/>
    <property type="project" value="MGI"/>
</dbReference>
<dbReference type="GO" id="GO:0006388">
    <property type="term" value="P:tRNA splicing, via endonucleolytic cleavage and ligation"/>
    <property type="evidence" value="ECO:0000250"/>
    <property type="project" value="UniProtKB"/>
</dbReference>
<dbReference type="CDD" id="cd17938">
    <property type="entry name" value="DEADc_DDX1"/>
    <property type="match status" value="1"/>
</dbReference>
<dbReference type="CDD" id="cd18787">
    <property type="entry name" value="SF2_C_DEAD"/>
    <property type="match status" value="1"/>
</dbReference>
<dbReference type="CDD" id="cd12873">
    <property type="entry name" value="SPRY_DDX1"/>
    <property type="match status" value="1"/>
</dbReference>
<dbReference type="FunFam" id="2.60.120.920:FF:000013">
    <property type="entry name" value="ATP-dependent RNA helicase DDX1"/>
    <property type="match status" value="1"/>
</dbReference>
<dbReference type="FunFam" id="3.40.50.300:FF:000652">
    <property type="entry name" value="ATP-dependent RNA helicase DDX1"/>
    <property type="match status" value="1"/>
</dbReference>
<dbReference type="FunFam" id="3.40.50.300:FF:000708">
    <property type="entry name" value="ATP-dependent RNA helicase DDX1"/>
    <property type="match status" value="1"/>
</dbReference>
<dbReference type="FunFam" id="3.40.50.300:FF:000716">
    <property type="entry name" value="ATP-dependent RNA helicase DDX1"/>
    <property type="match status" value="1"/>
</dbReference>
<dbReference type="Gene3D" id="2.60.120.920">
    <property type="match status" value="1"/>
</dbReference>
<dbReference type="Gene3D" id="3.40.50.300">
    <property type="entry name" value="P-loop containing nucleotide triphosphate hydrolases"/>
    <property type="match status" value="3"/>
</dbReference>
<dbReference type="InterPro" id="IPR001870">
    <property type="entry name" value="B30.2/SPRY"/>
</dbReference>
<dbReference type="InterPro" id="IPR043136">
    <property type="entry name" value="B30.2/SPRY_sf"/>
</dbReference>
<dbReference type="InterPro" id="IPR013320">
    <property type="entry name" value="ConA-like_dom_sf"/>
</dbReference>
<dbReference type="InterPro" id="IPR011545">
    <property type="entry name" value="DEAD/DEAH_box_helicase_dom"/>
</dbReference>
<dbReference type="InterPro" id="IPR014001">
    <property type="entry name" value="Helicase_ATP-bd"/>
</dbReference>
<dbReference type="InterPro" id="IPR001650">
    <property type="entry name" value="Helicase_C-like"/>
</dbReference>
<dbReference type="InterPro" id="IPR027417">
    <property type="entry name" value="P-loop_NTPase"/>
</dbReference>
<dbReference type="InterPro" id="IPR014014">
    <property type="entry name" value="RNA_helicase_DEAD_Q_motif"/>
</dbReference>
<dbReference type="InterPro" id="IPR003877">
    <property type="entry name" value="SPRY_dom"/>
</dbReference>
<dbReference type="PANTHER" id="PTHR24031">
    <property type="entry name" value="RNA HELICASE"/>
    <property type="match status" value="1"/>
</dbReference>
<dbReference type="Pfam" id="PF00270">
    <property type="entry name" value="DEAD"/>
    <property type="match status" value="2"/>
</dbReference>
<dbReference type="Pfam" id="PF00271">
    <property type="entry name" value="Helicase_C"/>
    <property type="match status" value="1"/>
</dbReference>
<dbReference type="Pfam" id="PF00622">
    <property type="entry name" value="SPRY"/>
    <property type="match status" value="1"/>
</dbReference>
<dbReference type="SMART" id="SM00487">
    <property type="entry name" value="DEXDc"/>
    <property type="match status" value="1"/>
</dbReference>
<dbReference type="SMART" id="SM00490">
    <property type="entry name" value="HELICc"/>
    <property type="match status" value="1"/>
</dbReference>
<dbReference type="SMART" id="SM00449">
    <property type="entry name" value="SPRY"/>
    <property type="match status" value="1"/>
</dbReference>
<dbReference type="SUPFAM" id="SSF49899">
    <property type="entry name" value="Concanavalin A-like lectins/glucanases"/>
    <property type="match status" value="1"/>
</dbReference>
<dbReference type="SUPFAM" id="SSF52540">
    <property type="entry name" value="P-loop containing nucleoside triphosphate hydrolases"/>
    <property type="match status" value="2"/>
</dbReference>
<dbReference type="PROSITE" id="PS50188">
    <property type="entry name" value="B302_SPRY"/>
    <property type="match status" value="1"/>
</dbReference>
<dbReference type="PROSITE" id="PS51192">
    <property type="entry name" value="HELICASE_ATP_BIND_1"/>
    <property type="match status" value="2"/>
</dbReference>
<dbReference type="PROSITE" id="PS51194">
    <property type="entry name" value="HELICASE_CTER"/>
    <property type="match status" value="1"/>
</dbReference>
<dbReference type="PROSITE" id="PS51195">
    <property type="entry name" value="Q_MOTIF"/>
    <property type="match status" value="1"/>
</dbReference>
<evidence type="ECO:0000250" key="1">
    <source>
        <dbReference type="UniProtKB" id="Q92499"/>
    </source>
</evidence>
<evidence type="ECO:0000255" key="2">
    <source>
        <dbReference type="PROSITE-ProRule" id="PRU00541"/>
    </source>
</evidence>
<evidence type="ECO:0000255" key="3">
    <source>
        <dbReference type="PROSITE-ProRule" id="PRU00542"/>
    </source>
</evidence>
<evidence type="ECO:0000255" key="4">
    <source>
        <dbReference type="PROSITE-ProRule" id="PRU00548"/>
    </source>
</evidence>
<evidence type="ECO:0000269" key="5">
    <source>
    </source>
</evidence>
<evidence type="ECO:0000269" key="6">
    <source>
    </source>
</evidence>
<evidence type="ECO:0000269" key="7">
    <source>
    </source>
</evidence>
<evidence type="ECO:0000305" key="8"/>
<evidence type="ECO:0007744" key="9">
    <source>
    </source>
</evidence>
<accession>Q91VR5</accession>
<accession>Q3TU41</accession>
<sequence>MAAFSEMGVMPEIAQAVEEMDWLLPTDIQAESIPLILGGGDVLMAAETGSGKTGAFSIPVIQIVYETLKDQQEGKKGKTTIKTGASVLNKWQMNPYDRGSAFAIGSDGLCCQSREVKEWHGCRGTRGLLKGKHYYEVSCHDQGLCRVGWSTMQASLDLGTDKFGFGFGGTGKKSHNKQFDNYGEEFTMHDTIGCYLDIDKGHVKFSKNGKDLGLAFEIPAHIKNQALFPACVLKNAELKFNFGEEEFKFPPKDGFVALSKAPDNYIVKSQHTGNAQVSQTKFLPNAPKALIVEPSRELAEQTLNNVKQFKKYIDNPKLRELLIIGGVAARDQLSVLDNGVDIVVGTPGRLDDLVSTGKLNLSQVRFLVLDEADGLLSQGYSDFINRMHNQIPQITCDGKRLQVIVCSATLHSFDVKKLSEKIMHFPTWVDLKGEDSVPDTVHHVVVPVNPKTDKLWERLGKNHIRTDDVHAKDNTRPGANSPEMWSEAIKILKGEYAVRAIKEHKMDQAIIFCRTKIDCDNLEQYFMQQGGGPDKKGHQFSCVCLHGDRKPHERKQNLERFKKGDVRFLICTDVAARGIDIHGVPYVINVTLPDEKQNYVHRIGRVGRAERMGLAISLVATEKEKVWYHVCSNRGKGCYNTRLKEDGGCTIWYNEMQLLSEIEEHLNCTISQVEPDIKVPVDEFDGKVTYGQKRAAGGGNYKGHVDVLAPTVQELAALEKEAQTSFLHLGYLPNQLFRTF</sequence>
<proteinExistence type="evidence at protein level"/>
<name>DDX1_MOUSE</name>
<comment type="function">
    <text evidence="1 6 7">Acts as an ATP-dependent RNA helicase, able to unwind both RNA-RNA and RNA-DNA duplexes. Possesses 5' single-stranded RNA overhang nuclease activity. Possesses ATPase activity on various RNA, but not DNA polynucleotides. May play a role in RNA clearance at DNA double-strand breaks (DSBs), thereby facilitating the template-guided repair of transcriptionally active regions of the genome. Together with RELA, acts as a coactivator to enhance NF-kappa-B-mediated transcriptional activation (By similarity). Acts as a positive transcriptional regulator of cyclin CCND2 expression (PubMed:19398953). Binds to the cyclin CCND2 promoter region (PubMed:19398953). Associates with chromatin at the NF-kappa-B promoter region via association with RELA. Binds to poly(A) RNA. May be involved in 3'-end cleavage and polyadenylation of pre-mRNAs. Component of the tRNA-splicing ligase complex required to facilitate the enzymatic turnover of catalytic subunit RTCB: together with archease (ZBTB8OS), acts by facilitating the guanylylation of RTCB, a key intermediate step in tRNA ligation (By similarity). Component of a multi-helicase-TICAM1 complex that acts as a cytoplasmic sensor of viral double-stranded RNA (dsRNA) and plays a role in the activation of a cascade of antiviral responses including the induction of pro-inflammatory cytokines via the adapter molecule TICAM1 (PubMed:21703541). Specifically binds (via helicase ATP-binding domain) on both short and long poly(I:C) dsRNA (PubMed:21703541).</text>
</comment>
<comment type="catalytic activity">
    <reaction>
        <text>ATP + H2O = ADP + phosphate + H(+)</text>
        <dbReference type="Rhea" id="RHEA:13065"/>
        <dbReference type="ChEBI" id="CHEBI:15377"/>
        <dbReference type="ChEBI" id="CHEBI:15378"/>
        <dbReference type="ChEBI" id="CHEBI:30616"/>
        <dbReference type="ChEBI" id="CHEBI:43474"/>
        <dbReference type="ChEBI" id="CHEBI:456216"/>
        <dbReference type="EC" id="3.6.4.13"/>
    </reaction>
</comment>
<comment type="subunit">
    <text evidence="1 5 7">Found in a multi-helicase-TICAM1 complex at least composed of DHX36, DDX1, DDX21 and TICAM1; this complex exists in resting cells with or without poly(I:C) RNA ligand stimulation (PubMed:21703541). Interacts with DHX36 (PubMed:21703541). Interacts (via B30.2/SPRY domain) with DDX21 (via N-terminus); this interaction serves as bridges to TICAM1 (PubMed:21703541). Interacts with FAM98A (via N- and C-terminus) (By similarity). Interacts with MBNL1 (By similarity). Interacts with CSTF2 (By similarity). Interacts with HNRNPK (By similarity). Interacts with ATM (By similarity). Interacts with RELA (via C-terminus) (By similarity). Component of the tRNA-splicing ligase complex (By similarity). Interacts with PHF5A (via C-terminus) (PubMed:18758164). Interacts with PQBP1 (By similarity). Interacts with ERCC6 (By similarity).</text>
</comment>
<comment type="subcellular location">
    <subcellularLocation>
        <location evidence="1">Nucleus</location>
    </subcellularLocation>
    <subcellularLocation>
        <location evidence="7">Cytoplasm</location>
        <location evidence="7">Cytosol</location>
    </subcellularLocation>
    <subcellularLocation>
        <location evidence="1">Cytoplasm</location>
    </subcellularLocation>
    <subcellularLocation>
        <location evidence="1">Cytoplasmic granule</location>
    </subcellularLocation>
    <subcellularLocation>
        <location evidence="7">Mitochondrion</location>
    </subcellularLocation>
    <text evidence="1 7">Localized with MBNL1, TIAL1 and YBX1 in stress granules upon stress. Localized with CSTF2 in cleavage bodies. Forms large aggregates called DDX1 bodies. Relocalized into multiple foci (IR-induced foci or IRIF) after IR treatment, a process that depends on the presence of chromosomal DNA and/or RNA-DNA duplexes. Relocalized at sites of DNA double-strand breaks (DSBs) in an ATM-dependent manner after IR treatment. Colocalized with RELA in the nucleus upon TNF-alpha induction. Enters into the nucleus in case of active transcription while it accumulates in cytosol when transcription level is low (By similarity). Colocalizes in the cytosol with DDX21, DHX36 and TICAM1 (PubMed:21703541). Colocalizes in the mitochondria with TICAM1 and poly(I:C) RNA ligand (PubMed:21703541). The multi-helicase-TICAM1 complex may translocate to the mitochondria upon poly(I:C) stimulation (PubMed:21703541).</text>
</comment>
<comment type="tissue specificity">
    <text evidence="6">Testis-specific. Expressed in the germ line stem cells, spermatogonia and spermatocytes of the testis. Also expressed in the seminoma and nonseminoma types of testicular germ cell tumors (TGCTs) (at protein level).</text>
</comment>
<comment type="developmental stage">
    <text evidence="6">Expressed in the testis from 11.5 to 19.5 dpc.</text>
</comment>
<comment type="domain">
    <text evidence="1">The helicase domain is involved in the stimulation of RELA transcriptional activity.</text>
</comment>
<comment type="PTM">
    <text evidence="1">Phosphorylated by ATM kinase; phosphorylation is increased in response to ionizing radiation (IR).</text>
</comment>
<comment type="similarity">
    <text evidence="8">Belongs to the DEAD box helicase family. DDX1 subfamily.</text>
</comment>
<gene>
    <name type="primary">Ddx1</name>
</gene>
<feature type="chain" id="PRO_0000054987" description="ATP-dependent RNA helicase DDX1">
    <location>
        <begin position="1"/>
        <end position="740"/>
    </location>
</feature>
<feature type="domain" description="Helicase ATP-binding" evidence="2">
    <location>
        <begin position="2"/>
        <end position="428"/>
    </location>
</feature>
<feature type="domain" description="B30.2/SPRY" evidence="4">
    <location>
        <begin position="70"/>
        <end position="247"/>
    </location>
</feature>
<feature type="domain" description="Helicase C-terminal" evidence="3">
    <location>
        <begin position="493"/>
        <end position="681"/>
    </location>
</feature>
<feature type="region of interest" description="Necessary for interaction with RELA" evidence="1">
    <location>
        <begin position="1"/>
        <end position="525"/>
    </location>
</feature>
<feature type="region of interest" description="Interaction with dsRNA" evidence="7">
    <location>
        <begin position="1"/>
        <end position="448"/>
    </location>
</feature>
<feature type="region of interest" description="Necessary for interaction with HNRNPK" evidence="1">
    <location>
        <begin position="1"/>
        <end position="295"/>
    </location>
</feature>
<feature type="region of interest" description="Necessary for interaction with HNRNPK" evidence="1">
    <location>
        <begin position="525"/>
        <end position="740"/>
    </location>
</feature>
<feature type="short sequence motif" description="DEAD box" evidence="2">
    <location>
        <begin position="370"/>
        <end position="373"/>
    </location>
</feature>
<feature type="binding site" evidence="2">
    <location>
        <begin position="46"/>
        <end position="53"/>
    </location>
    <ligand>
        <name>ATP</name>
        <dbReference type="ChEBI" id="CHEBI:30616"/>
    </ligand>
</feature>
<feature type="modified residue" description="N6-acetyllysine" evidence="1">
    <location>
        <position position="239"/>
    </location>
</feature>
<feature type="modified residue" description="N6-acetyllysine" evidence="1">
    <location>
        <position position="268"/>
    </location>
</feature>
<feature type="modified residue" description="N6-acetyllysine; alternate" evidence="1">
    <location>
        <position position="281"/>
    </location>
</feature>
<feature type="modified residue" description="Phosphoserine" evidence="9">
    <location>
        <position position="481"/>
    </location>
</feature>
<feature type="cross-link" description="Glycyl lysine isopeptide (Lys-Gly) (interchain with G-Cter in SUMO2); alternate" evidence="1">
    <location>
        <position position="281"/>
    </location>
</feature>
<reference key="1">
    <citation type="journal article" date="2005" name="Science">
        <title>The transcriptional landscape of the mammalian genome.</title>
        <authorList>
            <person name="Carninci P."/>
            <person name="Kasukawa T."/>
            <person name="Katayama S."/>
            <person name="Gough J."/>
            <person name="Frith M.C."/>
            <person name="Maeda N."/>
            <person name="Oyama R."/>
            <person name="Ravasi T."/>
            <person name="Lenhard B."/>
            <person name="Wells C."/>
            <person name="Kodzius R."/>
            <person name="Shimokawa K."/>
            <person name="Bajic V.B."/>
            <person name="Brenner S.E."/>
            <person name="Batalov S."/>
            <person name="Forrest A.R."/>
            <person name="Zavolan M."/>
            <person name="Davis M.J."/>
            <person name="Wilming L.G."/>
            <person name="Aidinis V."/>
            <person name="Allen J.E."/>
            <person name="Ambesi-Impiombato A."/>
            <person name="Apweiler R."/>
            <person name="Aturaliya R.N."/>
            <person name="Bailey T.L."/>
            <person name="Bansal M."/>
            <person name="Baxter L."/>
            <person name="Beisel K.W."/>
            <person name="Bersano T."/>
            <person name="Bono H."/>
            <person name="Chalk A.M."/>
            <person name="Chiu K.P."/>
            <person name="Choudhary V."/>
            <person name="Christoffels A."/>
            <person name="Clutterbuck D.R."/>
            <person name="Crowe M.L."/>
            <person name="Dalla E."/>
            <person name="Dalrymple B.P."/>
            <person name="de Bono B."/>
            <person name="Della Gatta G."/>
            <person name="di Bernardo D."/>
            <person name="Down T."/>
            <person name="Engstrom P."/>
            <person name="Fagiolini M."/>
            <person name="Faulkner G."/>
            <person name="Fletcher C.F."/>
            <person name="Fukushima T."/>
            <person name="Furuno M."/>
            <person name="Futaki S."/>
            <person name="Gariboldi M."/>
            <person name="Georgii-Hemming P."/>
            <person name="Gingeras T.R."/>
            <person name="Gojobori T."/>
            <person name="Green R.E."/>
            <person name="Gustincich S."/>
            <person name="Harbers M."/>
            <person name="Hayashi Y."/>
            <person name="Hensch T.K."/>
            <person name="Hirokawa N."/>
            <person name="Hill D."/>
            <person name="Huminiecki L."/>
            <person name="Iacono M."/>
            <person name="Ikeo K."/>
            <person name="Iwama A."/>
            <person name="Ishikawa T."/>
            <person name="Jakt M."/>
            <person name="Kanapin A."/>
            <person name="Katoh M."/>
            <person name="Kawasawa Y."/>
            <person name="Kelso J."/>
            <person name="Kitamura H."/>
            <person name="Kitano H."/>
            <person name="Kollias G."/>
            <person name="Krishnan S.P."/>
            <person name="Kruger A."/>
            <person name="Kummerfeld S.K."/>
            <person name="Kurochkin I.V."/>
            <person name="Lareau L.F."/>
            <person name="Lazarevic D."/>
            <person name="Lipovich L."/>
            <person name="Liu J."/>
            <person name="Liuni S."/>
            <person name="McWilliam S."/>
            <person name="Madan Babu M."/>
            <person name="Madera M."/>
            <person name="Marchionni L."/>
            <person name="Matsuda H."/>
            <person name="Matsuzawa S."/>
            <person name="Miki H."/>
            <person name="Mignone F."/>
            <person name="Miyake S."/>
            <person name="Morris K."/>
            <person name="Mottagui-Tabar S."/>
            <person name="Mulder N."/>
            <person name="Nakano N."/>
            <person name="Nakauchi H."/>
            <person name="Ng P."/>
            <person name="Nilsson R."/>
            <person name="Nishiguchi S."/>
            <person name="Nishikawa S."/>
            <person name="Nori F."/>
            <person name="Ohara O."/>
            <person name="Okazaki Y."/>
            <person name="Orlando V."/>
            <person name="Pang K.C."/>
            <person name="Pavan W.J."/>
            <person name="Pavesi G."/>
            <person name="Pesole G."/>
            <person name="Petrovsky N."/>
            <person name="Piazza S."/>
            <person name="Reed J."/>
            <person name="Reid J.F."/>
            <person name="Ring B.Z."/>
            <person name="Ringwald M."/>
            <person name="Rost B."/>
            <person name="Ruan Y."/>
            <person name="Salzberg S.L."/>
            <person name="Sandelin A."/>
            <person name="Schneider C."/>
            <person name="Schoenbach C."/>
            <person name="Sekiguchi K."/>
            <person name="Semple C.A."/>
            <person name="Seno S."/>
            <person name="Sessa L."/>
            <person name="Sheng Y."/>
            <person name="Shibata Y."/>
            <person name="Shimada H."/>
            <person name="Shimada K."/>
            <person name="Silva D."/>
            <person name="Sinclair B."/>
            <person name="Sperling S."/>
            <person name="Stupka E."/>
            <person name="Sugiura K."/>
            <person name="Sultana R."/>
            <person name="Takenaka Y."/>
            <person name="Taki K."/>
            <person name="Tammoja K."/>
            <person name="Tan S.L."/>
            <person name="Tang S."/>
            <person name="Taylor M.S."/>
            <person name="Tegner J."/>
            <person name="Teichmann S.A."/>
            <person name="Ueda H.R."/>
            <person name="van Nimwegen E."/>
            <person name="Verardo R."/>
            <person name="Wei C.L."/>
            <person name="Yagi K."/>
            <person name="Yamanishi H."/>
            <person name="Zabarovsky E."/>
            <person name="Zhu S."/>
            <person name="Zimmer A."/>
            <person name="Hide W."/>
            <person name="Bult C."/>
            <person name="Grimmond S.M."/>
            <person name="Teasdale R.D."/>
            <person name="Liu E.T."/>
            <person name="Brusic V."/>
            <person name="Quackenbush J."/>
            <person name="Wahlestedt C."/>
            <person name="Mattick J.S."/>
            <person name="Hume D.A."/>
            <person name="Kai C."/>
            <person name="Sasaki D."/>
            <person name="Tomaru Y."/>
            <person name="Fukuda S."/>
            <person name="Kanamori-Katayama M."/>
            <person name="Suzuki M."/>
            <person name="Aoki J."/>
            <person name="Arakawa T."/>
            <person name="Iida J."/>
            <person name="Imamura K."/>
            <person name="Itoh M."/>
            <person name="Kato T."/>
            <person name="Kawaji H."/>
            <person name="Kawagashira N."/>
            <person name="Kawashima T."/>
            <person name="Kojima M."/>
            <person name="Kondo S."/>
            <person name="Konno H."/>
            <person name="Nakano K."/>
            <person name="Ninomiya N."/>
            <person name="Nishio T."/>
            <person name="Okada M."/>
            <person name="Plessy C."/>
            <person name="Shibata K."/>
            <person name="Shiraki T."/>
            <person name="Suzuki S."/>
            <person name="Tagami M."/>
            <person name="Waki K."/>
            <person name="Watahiki A."/>
            <person name="Okamura-Oho Y."/>
            <person name="Suzuki H."/>
            <person name="Kawai J."/>
            <person name="Hayashizaki Y."/>
        </authorList>
    </citation>
    <scope>NUCLEOTIDE SEQUENCE [LARGE SCALE MRNA]</scope>
    <source>
        <strain>C57BL/6J</strain>
        <tissue>Bone marrow</tissue>
        <tissue>Head</tissue>
    </source>
</reference>
<reference key="2">
    <citation type="journal article" date="2004" name="Genome Res.">
        <title>The status, quality, and expansion of the NIH full-length cDNA project: the Mammalian Gene Collection (MGC).</title>
        <authorList>
            <consortium name="The MGC Project Team"/>
        </authorList>
    </citation>
    <scope>NUCLEOTIDE SEQUENCE [LARGE SCALE MRNA]</scope>
    <source>
        <strain>FVB/N-3</strain>
        <tissue>Mammary tumor</tissue>
    </source>
</reference>
<reference key="3">
    <citation type="journal article" date="2008" name="Cytogenet. Genome Res.">
        <title>PHF5A represents a bridge protein between splicing proteins and ATP-dependent helicases and is differentially expressed during mouse spermatogenesis.</title>
        <authorList>
            <person name="Rzymski T."/>
            <person name="Grzmil P."/>
            <person name="Meinhardt A."/>
            <person name="Wolf S."/>
            <person name="Burfeind P."/>
        </authorList>
    </citation>
    <scope>INTERACTION WITH PHF5A</scope>
</reference>
<reference key="4">
    <citation type="journal article" date="2009" name="Oncogene">
        <title>DDX1 is required for testicular tumorigenesis, partially through the transcriptional activation of 12p stem cell genes.</title>
        <authorList>
            <person name="Tanaka K."/>
            <person name="Okamoto S."/>
            <person name="Ishikawa Y."/>
            <person name="Tamura H."/>
            <person name="Hara T."/>
        </authorList>
    </citation>
    <scope>FUNCTION</scope>
    <scope>DNA-BINDING</scope>
    <scope>TISSUE SPECIFICITY</scope>
    <scope>DEVELOPMENTAL STAGE</scope>
</reference>
<reference key="5">
    <citation type="journal article" date="2010" name="Cell">
        <title>A tissue-specific atlas of mouse protein phosphorylation and expression.</title>
        <authorList>
            <person name="Huttlin E.L."/>
            <person name="Jedrychowski M.P."/>
            <person name="Elias J.E."/>
            <person name="Goswami T."/>
            <person name="Rad R."/>
            <person name="Beausoleil S.A."/>
            <person name="Villen J."/>
            <person name="Haas W."/>
            <person name="Sowa M.E."/>
            <person name="Gygi S.P."/>
        </authorList>
    </citation>
    <scope>PHOSPHORYLATION [LARGE SCALE ANALYSIS] AT SER-481</scope>
    <scope>IDENTIFICATION BY MASS SPECTROMETRY [LARGE SCALE ANALYSIS]</scope>
    <source>
        <tissue>Brain</tissue>
        <tissue>Brown adipose tissue</tissue>
        <tissue>Heart</tissue>
        <tissue>Kidney</tissue>
        <tissue>Liver</tissue>
        <tissue>Lung</tissue>
        <tissue>Pancreas</tissue>
        <tissue>Spleen</tissue>
        <tissue>Testis</tissue>
    </source>
</reference>
<reference key="6">
    <citation type="journal article" date="2011" name="Immunity">
        <title>DDX1, DDX21, and DHX36 helicases form a complex with the adaptor molecule TRIF to sense dsRNA in dendritic cells.</title>
        <authorList>
            <person name="Zhang Z."/>
            <person name="Kim T."/>
            <person name="Bao M."/>
            <person name="Facchinetti V."/>
            <person name="Jung S.Y."/>
            <person name="Ghaffari A.A."/>
            <person name="Qin J."/>
            <person name="Cheng G."/>
            <person name="Liu Y.J."/>
        </authorList>
    </citation>
    <scope>FUNCTION</scope>
    <scope>INTERACTION WITH DDX21 AND DHX36</scope>
    <scope>IDENTIFICATION IN A COMPLEX WITH DDX21; DHX36 AND TICAM1</scope>
    <scope>DOUBLE-STRANDED RNA-BINDING</scope>
    <scope>IDENTIFICATION BY MASS SPECTROMETRY</scope>
    <scope>REGION DOUBLE-STRANDED RNA-BINDING DOMAIN</scope>
    <scope>SUBCELLULAR LOCATION</scope>
</reference>